<keyword id="KW-0997">Cell inner membrane</keyword>
<keyword id="KW-1003">Cell membrane</keyword>
<keyword id="KW-0472">Membrane</keyword>
<keyword id="KW-0653">Protein transport</keyword>
<keyword id="KW-1185">Reference proteome</keyword>
<keyword id="KW-0811">Translocation</keyword>
<keyword id="KW-0812">Transmembrane</keyword>
<keyword id="KW-1133">Transmembrane helix</keyword>
<keyword id="KW-0813">Transport</keyword>
<comment type="function">
    <text evidence="1">Part of the twin-arginine translocation (Tat) system that transports large folded proteins containing a characteristic twin-arginine motif in their signal peptide across membranes. Together with TatC, TatB is part of a receptor directly interacting with Tat signal peptides. TatB may form an oligomeric binding site that transiently accommodates folded Tat precursor proteins before their translocation.</text>
</comment>
<comment type="subunit">
    <text evidence="1">The Tat system comprises two distinct complexes: a TatABC complex, containing multiple copies of TatA, TatB and TatC subunits, and a separate TatA complex, containing only TatA subunits. Substrates initially bind to the TatABC complex, which probably triggers association of the separate TatA complex to form the active translocon.</text>
</comment>
<comment type="subcellular location">
    <subcellularLocation>
        <location evidence="1">Cell inner membrane</location>
        <topology evidence="1">Single-pass membrane protein</topology>
    </subcellularLocation>
</comment>
<comment type="similarity">
    <text evidence="1">Belongs to the TatB family.</text>
</comment>
<sequence>MFEIGFWELVLVAIIGIVVVGPKRLPEVVRTLGLLLRKMRRTISSVRADIERELDLEEMRKLMSDVDEPLKKHVDQLNQSIWQAEYDLRQGGKNLLKMIDEPPYQEPPPAAHSVQTDAEAYRDTGIEPADKSSSPEHHHDDAAR</sequence>
<dbReference type="EMBL" id="CP000513">
    <property type="protein sequence ID" value="ABQ13996.1"/>
    <property type="molecule type" value="Genomic_DNA"/>
</dbReference>
<dbReference type="RefSeq" id="WP_012030788.1">
    <property type="nucleotide sequence ID" value="NC_009446.1"/>
</dbReference>
<dbReference type="SMR" id="A5EVU3"/>
<dbReference type="STRING" id="246195.DNO_0450"/>
<dbReference type="KEGG" id="dno:DNO_0450"/>
<dbReference type="eggNOG" id="COG1826">
    <property type="taxonomic scope" value="Bacteria"/>
</dbReference>
<dbReference type="HOGENOM" id="CLU_086034_1_1_6"/>
<dbReference type="OrthoDB" id="9816005at2"/>
<dbReference type="Proteomes" id="UP000000248">
    <property type="component" value="Chromosome"/>
</dbReference>
<dbReference type="GO" id="GO:0033281">
    <property type="term" value="C:TAT protein transport complex"/>
    <property type="evidence" value="ECO:0007669"/>
    <property type="project" value="UniProtKB-UniRule"/>
</dbReference>
<dbReference type="GO" id="GO:0008320">
    <property type="term" value="F:protein transmembrane transporter activity"/>
    <property type="evidence" value="ECO:0007669"/>
    <property type="project" value="UniProtKB-UniRule"/>
</dbReference>
<dbReference type="GO" id="GO:0043953">
    <property type="term" value="P:protein transport by the Tat complex"/>
    <property type="evidence" value="ECO:0007669"/>
    <property type="project" value="UniProtKB-UniRule"/>
</dbReference>
<dbReference type="Gene3D" id="1.20.5.3310">
    <property type="match status" value="1"/>
</dbReference>
<dbReference type="HAMAP" id="MF_00237">
    <property type="entry name" value="TatB"/>
    <property type="match status" value="1"/>
</dbReference>
<dbReference type="InterPro" id="IPR003369">
    <property type="entry name" value="TatA/B/E"/>
</dbReference>
<dbReference type="InterPro" id="IPR018448">
    <property type="entry name" value="TatB"/>
</dbReference>
<dbReference type="NCBIfam" id="TIGR01410">
    <property type="entry name" value="tatB"/>
    <property type="match status" value="1"/>
</dbReference>
<dbReference type="PANTHER" id="PTHR33162">
    <property type="entry name" value="SEC-INDEPENDENT PROTEIN TRANSLOCASE PROTEIN TATA, CHLOROPLASTIC"/>
    <property type="match status" value="1"/>
</dbReference>
<dbReference type="PANTHER" id="PTHR33162:SF1">
    <property type="entry name" value="SEC-INDEPENDENT PROTEIN TRANSLOCASE PROTEIN TATA, CHLOROPLASTIC"/>
    <property type="match status" value="1"/>
</dbReference>
<dbReference type="Pfam" id="PF02416">
    <property type="entry name" value="TatA_B_E"/>
    <property type="match status" value="1"/>
</dbReference>
<dbReference type="PRINTS" id="PR01506">
    <property type="entry name" value="TATBPROTEIN"/>
</dbReference>
<feature type="chain" id="PRO_0000301165" description="Sec-independent protein translocase protein TatB">
    <location>
        <begin position="1"/>
        <end position="144"/>
    </location>
</feature>
<feature type="transmembrane region" description="Helical" evidence="1">
    <location>
        <begin position="1"/>
        <end position="21"/>
    </location>
</feature>
<feature type="region of interest" description="Disordered" evidence="2">
    <location>
        <begin position="97"/>
        <end position="144"/>
    </location>
</feature>
<feature type="compositionally biased region" description="Basic and acidic residues" evidence="2">
    <location>
        <begin position="119"/>
        <end position="144"/>
    </location>
</feature>
<name>TATB_DICNV</name>
<evidence type="ECO:0000255" key="1">
    <source>
        <dbReference type="HAMAP-Rule" id="MF_00237"/>
    </source>
</evidence>
<evidence type="ECO:0000256" key="2">
    <source>
        <dbReference type="SAM" id="MobiDB-lite"/>
    </source>
</evidence>
<protein>
    <recommendedName>
        <fullName evidence="1">Sec-independent protein translocase protein TatB</fullName>
    </recommendedName>
</protein>
<reference key="1">
    <citation type="journal article" date="2007" name="Nat. Biotechnol.">
        <title>Genome sequence and identification of candidate vaccine antigens from the animal pathogen Dichelobacter nodosus.</title>
        <authorList>
            <person name="Myers G.S.A."/>
            <person name="Parker D."/>
            <person name="Al-Hasani K."/>
            <person name="Kennan R.M."/>
            <person name="Seemann T."/>
            <person name="Ren Q."/>
            <person name="Badger J.H."/>
            <person name="Selengut J.D."/>
            <person name="Deboy R.T."/>
            <person name="Tettelin H."/>
            <person name="Boyce J.D."/>
            <person name="McCarl V.P."/>
            <person name="Han X."/>
            <person name="Nelson W.C."/>
            <person name="Madupu R."/>
            <person name="Mohamoud Y."/>
            <person name="Holley T."/>
            <person name="Fedorova N."/>
            <person name="Khouri H."/>
            <person name="Bottomley S.P."/>
            <person name="Whittington R.J."/>
            <person name="Adler B."/>
            <person name="Songer J.G."/>
            <person name="Rood J.I."/>
            <person name="Paulsen I.T."/>
        </authorList>
    </citation>
    <scope>NUCLEOTIDE SEQUENCE [LARGE SCALE GENOMIC DNA]</scope>
    <source>
        <strain>VCS1703A</strain>
    </source>
</reference>
<accession>A5EVU3</accession>
<gene>
    <name evidence="1" type="primary">tatB</name>
    <name type="ordered locus">DNO_0450</name>
</gene>
<proteinExistence type="inferred from homology"/>
<organism>
    <name type="scientific">Dichelobacter nodosus (strain VCS1703A)</name>
    <dbReference type="NCBI Taxonomy" id="246195"/>
    <lineage>
        <taxon>Bacteria</taxon>
        <taxon>Pseudomonadati</taxon>
        <taxon>Pseudomonadota</taxon>
        <taxon>Gammaproteobacteria</taxon>
        <taxon>Cardiobacteriales</taxon>
        <taxon>Cardiobacteriaceae</taxon>
        <taxon>Dichelobacter</taxon>
    </lineage>
</organism>